<protein>
    <recommendedName>
        <fullName evidence="1">Lon protease 1</fullName>
        <ecNumber evidence="1">3.4.21.53</ecNumber>
    </recommendedName>
    <alternativeName>
        <fullName evidence="1">ATP-dependent protease La 1</fullName>
    </alternativeName>
</protein>
<proteinExistence type="inferred from homology"/>
<dbReference type="EC" id="3.4.21.53" evidence="1"/>
<dbReference type="EMBL" id="CP000478">
    <property type="protein sequence ID" value="ABK15801.1"/>
    <property type="molecule type" value="Genomic_DNA"/>
</dbReference>
<dbReference type="RefSeq" id="WP_011696974.1">
    <property type="nucleotide sequence ID" value="NC_008554.1"/>
</dbReference>
<dbReference type="SMR" id="A0LEE9"/>
<dbReference type="FunCoup" id="A0LEE9">
    <property type="interactions" value="551"/>
</dbReference>
<dbReference type="STRING" id="335543.Sfum_0098"/>
<dbReference type="MEROPS" id="S16.001"/>
<dbReference type="KEGG" id="sfu:Sfum_0098"/>
<dbReference type="eggNOG" id="COG0466">
    <property type="taxonomic scope" value="Bacteria"/>
</dbReference>
<dbReference type="HOGENOM" id="CLU_004109_4_3_7"/>
<dbReference type="InParanoid" id="A0LEE9"/>
<dbReference type="OrthoDB" id="9803599at2"/>
<dbReference type="Proteomes" id="UP000001784">
    <property type="component" value="Chromosome"/>
</dbReference>
<dbReference type="GO" id="GO:0005737">
    <property type="term" value="C:cytoplasm"/>
    <property type="evidence" value="ECO:0007669"/>
    <property type="project" value="UniProtKB-SubCell"/>
</dbReference>
<dbReference type="GO" id="GO:0005524">
    <property type="term" value="F:ATP binding"/>
    <property type="evidence" value="ECO:0007669"/>
    <property type="project" value="UniProtKB-UniRule"/>
</dbReference>
<dbReference type="GO" id="GO:0016887">
    <property type="term" value="F:ATP hydrolysis activity"/>
    <property type="evidence" value="ECO:0007669"/>
    <property type="project" value="UniProtKB-UniRule"/>
</dbReference>
<dbReference type="GO" id="GO:0004176">
    <property type="term" value="F:ATP-dependent peptidase activity"/>
    <property type="evidence" value="ECO:0007669"/>
    <property type="project" value="UniProtKB-UniRule"/>
</dbReference>
<dbReference type="GO" id="GO:0043565">
    <property type="term" value="F:sequence-specific DNA binding"/>
    <property type="evidence" value="ECO:0007669"/>
    <property type="project" value="UniProtKB-UniRule"/>
</dbReference>
<dbReference type="GO" id="GO:0004252">
    <property type="term" value="F:serine-type endopeptidase activity"/>
    <property type="evidence" value="ECO:0007669"/>
    <property type="project" value="UniProtKB-UniRule"/>
</dbReference>
<dbReference type="GO" id="GO:0034605">
    <property type="term" value="P:cellular response to heat"/>
    <property type="evidence" value="ECO:0007669"/>
    <property type="project" value="UniProtKB-UniRule"/>
</dbReference>
<dbReference type="GO" id="GO:0006515">
    <property type="term" value="P:protein quality control for misfolded or incompletely synthesized proteins"/>
    <property type="evidence" value="ECO:0007669"/>
    <property type="project" value="UniProtKB-UniRule"/>
</dbReference>
<dbReference type="CDD" id="cd19500">
    <property type="entry name" value="RecA-like_Lon"/>
    <property type="match status" value="1"/>
</dbReference>
<dbReference type="FunFam" id="3.30.230.10:FF:000010">
    <property type="entry name" value="Lon protease"/>
    <property type="match status" value="1"/>
</dbReference>
<dbReference type="FunFam" id="1.20.5.5270:FF:000002">
    <property type="entry name" value="Lon protease homolog"/>
    <property type="match status" value="1"/>
</dbReference>
<dbReference type="FunFam" id="3.40.50.300:FF:000021">
    <property type="entry name" value="Lon protease homolog"/>
    <property type="match status" value="1"/>
</dbReference>
<dbReference type="Gene3D" id="1.10.8.60">
    <property type="match status" value="1"/>
</dbReference>
<dbReference type="Gene3D" id="1.20.5.5270">
    <property type="match status" value="1"/>
</dbReference>
<dbReference type="Gene3D" id="1.20.58.1480">
    <property type="match status" value="1"/>
</dbReference>
<dbReference type="Gene3D" id="3.30.230.10">
    <property type="match status" value="1"/>
</dbReference>
<dbReference type="Gene3D" id="2.30.130.40">
    <property type="entry name" value="LON domain-like"/>
    <property type="match status" value="1"/>
</dbReference>
<dbReference type="Gene3D" id="3.40.50.300">
    <property type="entry name" value="P-loop containing nucleotide triphosphate hydrolases"/>
    <property type="match status" value="1"/>
</dbReference>
<dbReference type="HAMAP" id="MF_01973">
    <property type="entry name" value="lon_bact"/>
    <property type="match status" value="1"/>
</dbReference>
<dbReference type="InterPro" id="IPR003593">
    <property type="entry name" value="AAA+_ATPase"/>
</dbReference>
<dbReference type="InterPro" id="IPR003959">
    <property type="entry name" value="ATPase_AAA_core"/>
</dbReference>
<dbReference type="InterPro" id="IPR027543">
    <property type="entry name" value="Lon_bac"/>
</dbReference>
<dbReference type="InterPro" id="IPR004815">
    <property type="entry name" value="Lon_bac/euk-typ"/>
</dbReference>
<dbReference type="InterPro" id="IPR054594">
    <property type="entry name" value="Lon_lid"/>
</dbReference>
<dbReference type="InterPro" id="IPR008269">
    <property type="entry name" value="Lon_proteolytic"/>
</dbReference>
<dbReference type="InterPro" id="IPR027065">
    <property type="entry name" value="Lon_Prtase"/>
</dbReference>
<dbReference type="InterPro" id="IPR003111">
    <property type="entry name" value="Lon_prtase_N"/>
</dbReference>
<dbReference type="InterPro" id="IPR046336">
    <property type="entry name" value="Lon_prtase_N_sf"/>
</dbReference>
<dbReference type="InterPro" id="IPR027417">
    <property type="entry name" value="P-loop_NTPase"/>
</dbReference>
<dbReference type="InterPro" id="IPR008268">
    <property type="entry name" value="Peptidase_S16_AS"/>
</dbReference>
<dbReference type="InterPro" id="IPR015947">
    <property type="entry name" value="PUA-like_sf"/>
</dbReference>
<dbReference type="InterPro" id="IPR020568">
    <property type="entry name" value="Ribosomal_Su5_D2-typ_SF"/>
</dbReference>
<dbReference type="InterPro" id="IPR014721">
    <property type="entry name" value="Ribsml_uS5_D2-typ_fold_subgr"/>
</dbReference>
<dbReference type="NCBIfam" id="TIGR00763">
    <property type="entry name" value="lon"/>
    <property type="match status" value="1"/>
</dbReference>
<dbReference type="NCBIfam" id="NF008053">
    <property type="entry name" value="PRK10787.1"/>
    <property type="match status" value="1"/>
</dbReference>
<dbReference type="PANTHER" id="PTHR10046">
    <property type="entry name" value="ATP DEPENDENT LON PROTEASE FAMILY MEMBER"/>
    <property type="match status" value="1"/>
</dbReference>
<dbReference type="Pfam" id="PF00004">
    <property type="entry name" value="AAA"/>
    <property type="match status" value="1"/>
</dbReference>
<dbReference type="Pfam" id="PF05362">
    <property type="entry name" value="Lon_C"/>
    <property type="match status" value="1"/>
</dbReference>
<dbReference type="Pfam" id="PF22667">
    <property type="entry name" value="Lon_lid"/>
    <property type="match status" value="1"/>
</dbReference>
<dbReference type="Pfam" id="PF02190">
    <property type="entry name" value="LON_substr_bdg"/>
    <property type="match status" value="1"/>
</dbReference>
<dbReference type="PIRSF" id="PIRSF001174">
    <property type="entry name" value="Lon_proteas"/>
    <property type="match status" value="1"/>
</dbReference>
<dbReference type="PRINTS" id="PR00830">
    <property type="entry name" value="ENDOLAPTASE"/>
</dbReference>
<dbReference type="SMART" id="SM00382">
    <property type="entry name" value="AAA"/>
    <property type="match status" value="1"/>
</dbReference>
<dbReference type="SMART" id="SM00464">
    <property type="entry name" value="LON"/>
    <property type="match status" value="1"/>
</dbReference>
<dbReference type="SUPFAM" id="SSF52540">
    <property type="entry name" value="P-loop containing nucleoside triphosphate hydrolases"/>
    <property type="match status" value="1"/>
</dbReference>
<dbReference type="SUPFAM" id="SSF88697">
    <property type="entry name" value="PUA domain-like"/>
    <property type="match status" value="1"/>
</dbReference>
<dbReference type="SUPFAM" id="SSF54211">
    <property type="entry name" value="Ribosomal protein S5 domain 2-like"/>
    <property type="match status" value="1"/>
</dbReference>
<dbReference type="PROSITE" id="PS51787">
    <property type="entry name" value="LON_N"/>
    <property type="match status" value="1"/>
</dbReference>
<dbReference type="PROSITE" id="PS51786">
    <property type="entry name" value="LON_PROTEOLYTIC"/>
    <property type="match status" value="1"/>
</dbReference>
<dbReference type="PROSITE" id="PS01046">
    <property type="entry name" value="LON_SER"/>
    <property type="match status" value="1"/>
</dbReference>
<reference key="1">
    <citation type="submission" date="2006-10" db="EMBL/GenBank/DDBJ databases">
        <title>Complete sequence of Syntrophobacter fumaroxidans MPOB.</title>
        <authorList>
            <consortium name="US DOE Joint Genome Institute"/>
            <person name="Copeland A."/>
            <person name="Lucas S."/>
            <person name="Lapidus A."/>
            <person name="Barry K."/>
            <person name="Detter J.C."/>
            <person name="Glavina del Rio T."/>
            <person name="Hammon N."/>
            <person name="Israni S."/>
            <person name="Pitluck S."/>
            <person name="Goltsman E.G."/>
            <person name="Martinez M."/>
            <person name="Schmutz J."/>
            <person name="Larimer F."/>
            <person name="Land M."/>
            <person name="Hauser L."/>
            <person name="Kyrpides N."/>
            <person name="Kim E."/>
            <person name="Boone D.R."/>
            <person name="Brockman F."/>
            <person name="Culley D."/>
            <person name="Ferry J."/>
            <person name="Gunsalus R."/>
            <person name="McInerney M.J."/>
            <person name="Morrison M."/>
            <person name="Plugge C."/>
            <person name="Rohlin L."/>
            <person name="Scholten J."/>
            <person name="Sieber J."/>
            <person name="Stams A.J.M."/>
            <person name="Worm P."/>
            <person name="Henstra A.M."/>
            <person name="Richardson P."/>
        </authorList>
    </citation>
    <scope>NUCLEOTIDE SEQUENCE [LARGE SCALE GENOMIC DNA]</scope>
    <source>
        <strain>DSM 10017 / MPOB</strain>
    </source>
</reference>
<name>LON1_SYNFM</name>
<accession>A0LEE9</accession>
<keyword id="KW-0067">ATP-binding</keyword>
<keyword id="KW-0963">Cytoplasm</keyword>
<keyword id="KW-0378">Hydrolase</keyword>
<keyword id="KW-0547">Nucleotide-binding</keyword>
<keyword id="KW-0645">Protease</keyword>
<keyword id="KW-1185">Reference proteome</keyword>
<keyword id="KW-0720">Serine protease</keyword>
<keyword id="KW-0346">Stress response</keyword>
<comment type="function">
    <text evidence="1">ATP-dependent serine protease that mediates the selective degradation of mutant and abnormal proteins as well as certain short-lived regulatory proteins. Required for cellular homeostasis and for survival from DNA damage and developmental changes induced by stress. Degrades polypeptides processively to yield small peptide fragments that are 5 to 10 amino acids long. Binds to DNA in a double-stranded, site-specific manner.</text>
</comment>
<comment type="catalytic activity">
    <reaction evidence="1">
        <text>Hydrolysis of proteins in presence of ATP.</text>
        <dbReference type="EC" id="3.4.21.53"/>
    </reaction>
</comment>
<comment type="subunit">
    <text evidence="1">Homohexamer. Organized in a ring with a central cavity.</text>
</comment>
<comment type="subcellular location">
    <subcellularLocation>
        <location evidence="1">Cytoplasm</location>
    </subcellularLocation>
</comment>
<comment type="induction">
    <text evidence="1">By heat shock.</text>
</comment>
<comment type="similarity">
    <text evidence="1">Belongs to the peptidase S16 family.</text>
</comment>
<gene>
    <name evidence="1" type="primary">lon1</name>
    <name type="ordered locus">Sfum_0098</name>
</gene>
<evidence type="ECO:0000255" key="1">
    <source>
        <dbReference type="HAMAP-Rule" id="MF_01973"/>
    </source>
</evidence>
<evidence type="ECO:0000255" key="2">
    <source>
        <dbReference type="PROSITE-ProRule" id="PRU01122"/>
    </source>
</evidence>
<evidence type="ECO:0000255" key="3">
    <source>
        <dbReference type="PROSITE-ProRule" id="PRU01123"/>
    </source>
</evidence>
<evidence type="ECO:0000256" key="4">
    <source>
        <dbReference type="SAM" id="MobiDB-lite"/>
    </source>
</evidence>
<feature type="chain" id="PRO_0000396605" description="Lon protease 1">
    <location>
        <begin position="1"/>
        <end position="815"/>
    </location>
</feature>
<feature type="domain" description="Lon N-terminal" evidence="3">
    <location>
        <begin position="19"/>
        <end position="212"/>
    </location>
</feature>
<feature type="domain" description="Lon proteolytic" evidence="2">
    <location>
        <begin position="601"/>
        <end position="782"/>
    </location>
</feature>
<feature type="region of interest" description="Disordered" evidence="4">
    <location>
        <begin position="793"/>
        <end position="815"/>
    </location>
</feature>
<feature type="active site" evidence="1">
    <location>
        <position position="688"/>
    </location>
</feature>
<feature type="active site" evidence="1">
    <location>
        <position position="731"/>
    </location>
</feature>
<feature type="binding site" evidence="1">
    <location>
        <begin position="364"/>
        <end position="371"/>
    </location>
    <ligand>
        <name>ATP</name>
        <dbReference type="ChEBI" id="CHEBI:30616"/>
    </ligand>
</feature>
<sequence>MFKLTRNKDEQSGSATFAMPLLPLRDIVVFPSMVVPLFVGRDKSVNALDKAMATDKKIFLAAQTKAKTDTPGESDIYRVGTVANILQILRLPDGTVKVLVEGDFRARISSFIPHPDHFFVSLEGLEESEDESVEIEALRRGVRAAFDAYSKHNKKINQEILDAVAAIDNASRLADTIAAYMPFKLDVKQKLLETLGVAKRLEKLFGQIRSEIEILQTEERIKGRVKKQMEKTQREYYLNEQMRAIQKEMGEKDDFKSELEELEKRIKRKKLSQEAAAKVRAEFKKLKLMSPMSAEATVVRNYIDWILSLPWYEKTRDKLDIDESIRILDEDHYGLEKPKERIIEYLAVQALVKRIKGPILCFVGPPGVGKTSLAKSIARAMNRNFIRLSLGGVRDEAEIRGHRRTYIGAMPGKIIQSLKKVKSNNPVFCLDEVDKMSMDFRGDPSAALLEVLDPEQNFSFNDHYLDLDYDLSEVFFITTANNLHSIPPPLRDRMEIIQIAGYTEFDKLNIGRNFLVAKQCKANGLSLDNIAFSDDMLLYIIRHYTKEAGVRNLEREIASICRKVAKEVVRRGPETRIELTEDLVQEYLGIPKFRYGVAEEKDEIGLAVGLAWTEFGGDILGIETVVMPGKGKVQITGKLGDVMQESAQAALSYVRSRAKRLGIDPDFYQNFDIHVHVPEGAIPKDGPSAGITMATSIVSALARIPVRSDLAMTGEITLRGRVLPIGGLKEKILAAHRALLKTVLIPKDNAKDLKDIPAKILEEIQVELVEHMDDVLRKAMVVPEDRELFHEEEAGAQQAVMFEQKPPAADEIRAH</sequence>
<organism>
    <name type="scientific">Syntrophobacter fumaroxidans (strain DSM 10017 / MPOB)</name>
    <dbReference type="NCBI Taxonomy" id="335543"/>
    <lineage>
        <taxon>Bacteria</taxon>
        <taxon>Pseudomonadati</taxon>
        <taxon>Thermodesulfobacteriota</taxon>
        <taxon>Syntrophobacteria</taxon>
        <taxon>Syntrophobacterales</taxon>
        <taxon>Syntrophobacteraceae</taxon>
        <taxon>Syntrophobacter</taxon>
    </lineage>
</organism>